<sequence length="497" mass="55638">MPPSTDSSRRNSEEGSSDGFKLDSSALNKPPEEVFDIVGKLGEGSYGSVHKAIHRESGHVLAIKKVPVDTDLQEIIKEISIMQQCKSKYVVKYYGSYFKHSDLWIVMEYCGAGSISDIMRARRKPLSEQEISAVLRDTLKGLQYLHDLKKIHRDIKAGNILLNTDGIAKLADFGVAGQLTDTMAKRNTVIGTPFWMAPEVIEEIGYDTKADIWSLGITAIEMAEGRPPYSDIHPMRAIFMIPTKPPPTFKKPEEWSSEFNDFIRSCLIKKPEERKTALRLCEHTFIKNAPGCDIMQLMIQDAQEKAILGQAPMAASSGNDATLLSEGMSTMIDGGESTLVQHKDNYVTAQSLRSQMESLRIGGEIPKSAYIPGSSKNGNSPRVQPPGHTASASDPSKNQPFAQDGTGPNFQLGTSESSYKDASYNMMNTEAEYENRFQRAVVDGDFEFLRNITLDELIRRKESLDSEMEEEIRELQRRYKTKRQPILDVIEIKKRLQ</sequence>
<dbReference type="EC" id="2.7.11.1"/>
<dbReference type="EMBL" id="AF271359">
    <property type="protein sequence ID" value="AAF75788.1"/>
    <property type="molecule type" value="mRNA"/>
</dbReference>
<dbReference type="EMBL" id="BX284606">
    <property type="protein sequence ID" value="CCD65402.1"/>
    <property type="molecule type" value="Genomic_DNA"/>
</dbReference>
<dbReference type="EMBL" id="BX284606">
    <property type="protein sequence ID" value="CCD65403.1"/>
    <property type="molecule type" value="Genomic_DNA"/>
</dbReference>
<dbReference type="RefSeq" id="NP_001024575.2">
    <molecule id="Q9NB31-1"/>
    <property type="nucleotide sequence ID" value="NM_001029404.7"/>
</dbReference>
<dbReference type="RefSeq" id="NP_508743.4">
    <molecule id="Q9NB31-2"/>
    <property type="nucleotide sequence ID" value="NM_076342.5"/>
</dbReference>
<dbReference type="SMR" id="Q9NB31"/>
<dbReference type="BioGRID" id="45643">
    <property type="interactions" value="3"/>
</dbReference>
<dbReference type="FunCoup" id="Q9NB31">
    <property type="interactions" value="2490"/>
</dbReference>
<dbReference type="IntAct" id="Q9NB31">
    <property type="interactions" value="1"/>
</dbReference>
<dbReference type="STRING" id="6239.F14H12.4b.1"/>
<dbReference type="iPTMnet" id="Q9NB31"/>
<dbReference type="PaxDb" id="6239-F14H12.4b"/>
<dbReference type="PeptideAtlas" id="Q9NB31"/>
<dbReference type="EnsemblMetazoa" id="F14H12.4a.1">
    <molecule id="Q9NB31-2"/>
    <property type="protein sequence ID" value="F14H12.4a.1"/>
    <property type="gene ID" value="WBGene00017472"/>
</dbReference>
<dbReference type="EnsemblMetazoa" id="F14H12.4b.1">
    <molecule id="Q9NB31-1"/>
    <property type="protein sequence ID" value="F14H12.4b.1"/>
    <property type="gene ID" value="WBGene00017472"/>
</dbReference>
<dbReference type="GeneID" id="180708"/>
<dbReference type="KEGG" id="cel:CELE_F14H12.4"/>
<dbReference type="UCSC" id="F14H12.4b">
    <molecule id="Q9NB31-1"/>
    <property type="organism name" value="c. elegans"/>
</dbReference>
<dbReference type="AGR" id="WB:WBGene00017472"/>
<dbReference type="CTD" id="180708"/>
<dbReference type="WormBase" id="F14H12.4a">
    <molecule id="Q9NB31-2"/>
    <property type="protein sequence ID" value="CE39916"/>
    <property type="gene ID" value="WBGene00017472"/>
    <property type="gene designation" value="cst-1"/>
</dbReference>
<dbReference type="WormBase" id="F14H12.4b">
    <molecule id="Q9NB31-1"/>
    <property type="protein sequence ID" value="CE39917"/>
    <property type="gene ID" value="WBGene00017472"/>
    <property type="gene designation" value="cst-1"/>
</dbReference>
<dbReference type="eggNOG" id="KOG0574">
    <property type="taxonomic scope" value="Eukaryota"/>
</dbReference>
<dbReference type="GeneTree" id="ENSGT00940000154984"/>
<dbReference type="InParanoid" id="Q9NB31"/>
<dbReference type="OMA" id="NLEADMD"/>
<dbReference type="OrthoDB" id="8693905at2759"/>
<dbReference type="PhylomeDB" id="Q9NB31"/>
<dbReference type="Reactome" id="R-CEL-2028269">
    <property type="pathway name" value="Signaling by Hippo"/>
</dbReference>
<dbReference type="PRO" id="PR:Q9NB31"/>
<dbReference type="Proteomes" id="UP000001940">
    <property type="component" value="Chromosome X"/>
</dbReference>
<dbReference type="Bgee" id="WBGene00017472">
    <property type="expression patterns" value="Expressed in pharyngeal muscle cell (C elegans) and 3 other cell types or tissues"/>
</dbReference>
<dbReference type="GO" id="GO:0005737">
    <property type="term" value="C:cytoplasm"/>
    <property type="evidence" value="ECO:0000318"/>
    <property type="project" value="GO_Central"/>
</dbReference>
<dbReference type="GO" id="GO:0005524">
    <property type="term" value="F:ATP binding"/>
    <property type="evidence" value="ECO:0007669"/>
    <property type="project" value="UniProtKB-KW"/>
</dbReference>
<dbReference type="GO" id="GO:0106310">
    <property type="term" value="F:protein serine kinase activity"/>
    <property type="evidence" value="ECO:0007669"/>
    <property type="project" value="RHEA"/>
</dbReference>
<dbReference type="GO" id="GO:0004674">
    <property type="term" value="F:protein serine/threonine kinase activity"/>
    <property type="evidence" value="ECO:0000250"/>
    <property type="project" value="UniProtKB"/>
</dbReference>
<dbReference type="GO" id="GO:0008340">
    <property type="term" value="P:determination of adult lifespan"/>
    <property type="evidence" value="ECO:0000315"/>
    <property type="project" value="UniProtKB"/>
</dbReference>
<dbReference type="GO" id="GO:0035556">
    <property type="term" value="P:intracellular signal transduction"/>
    <property type="evidence" value="ECO:0000318"/>
    <property type="project" value="GO_Central"/>
</dbReference>
<dbReference type="GO" id="GO:0055001">
    <property type="term" value="P:muscle cell development"/>
    <property type="evidence" value="ECO:0000315"/>
    <property type="project" value="UniProtKB"/>
</dbReference>
<dbReference type="GO" id="GO:0090090">
    <property type="term" value="P:negative regulation of canonical Wnt signaling pathway"/>
    <property type="evidence" value="ECO:0000318"/>
    <property type="project" value="GO_Central"/>
</dbReference>
<dbReference type="GO" id="GO:0018105">
    <property type="term" value="P:peptidyl-serine phosphorylation"/>
    <property type="evidence" value="ECO:0000250"/>
    <property type="project" value="UniProtKB"/>
</dbReference>
<dbReference type="GO" id="GO:0043065">
    <property type="term" value="P:positive regulation of apoptotic process"/>
    <property type="evidence" value="ECO:0000318"/>
    <property type="project" value="GO_Central"/>
</dbReference>
<dbReference type="GO" id="GO:0051262">
    <property type="term" value="P:protein tetramerization"/>
    <property type="evidence" value="ECO:0007669"/>
    <property type="project" value="InterPro"/>
</dbReference>
<dbReference type="GO" id="GO:0043408">
    <property type="term" value="P:regulation of MAPK cascade"/>
    <property type="evidence" value="ECO:0000318"/>
    <property type="project" value="GO_Central"/>
</dbReference>
<dbReference type="CDD" id="cd21884">
    <property type="entry name" value="SARAH_MST_Hpo"/>
    <property type="match status" value="1"/>
</dbReference>
<dbReference type="CDD" id="cd06612">
    <property type="entry name" value="STKc_MST1_2"/>
    <property type="match status" value="1"/>
</dbReference>
<dbReference type="FunFam" id="3.30.200.20:FF:000040">
    <property type="entry name" value="Dual specificity mitogen-activated protein kinase kinase"/>
    <property type="match status" value="1"/>
</dbReference>
<dbReference type="FunFam" id="1.10.510.10:FF:000605">
    <property type="entry name" value="serine/threonine-protein kinase 3 isoform X2"/>
    <property type="match status" value="1"/>
</dbReference>
<dbReference type="Gene3D" id="4.10.170.10">
    <property type="entry name" value="p53-like tetramerisation domain"/>
    <property type="match status" value="1"/>
</dbReference>
<dbReference type="Gene3D" id="1.10.510.10">
    <property type="entry name" value="Transferase(Phosphotransferase) domain 1"/>
    <property type="match status" value="1"/>
</dbReference>
<dbReference type="InterPro" id="IPR011009">
    <property type="entry name" value="Kinase-like_dom_sf"/>
</dbReference>
<dbReference type="InterPro" id="IPR024205">
    <property type="entry name" value="Mst1_2_SARAH_domain"/>
</dbReference>
<dbReference type="InterPro" id="IPR036674">
    <property type="entry name" value="p53_tetramer_sf"/>
</dbReference>
<dbReference type="InterPro" id="IPR000719">
    <property type="entry name" value="Prot_kinase_dom"/>
</dbReference>
<dbReference type="InterPro" id="IPR017441">
    <property type="entry name" value="Protein_kinase_ATP_BS"/>
</dbReference>
<dbReference type="InterPro" id="IPR011524">
    <property type="entry name" value="SARAH_dom"/>
</dbReference>
<dbReference type="InterPro" id="IPR050629">
    <property type="entry name" value="STE20/SPS1-PAK"/>
</dbReference>
<dbReference type="PANTHER" id="PTHR48012:SF10">
    <property type="entry name" value="FI20177P1"/>
    <property type="match status" value="1"/>
</dbReference>
<dbReference type="PANTHER" id="PTHR48012">
    <property type="entry name" value="STERILE20-LIKE KINASE, ISOFORM B-RELATED"/>
    <property type="match status" value="1"/>
</dbReference>
<dbReference type="Pfam" id="PF11629">
    <property type="entry name" value="Mst1_SARAH"/>
    <property type="match status" value="1"/>
</dbReference>
<dbReference type="Pfam" id="PF00069">
    <property type="entry name" value="Pkinase"/>
    <property type="match status" value="1"/>
</dbReference>
<dbReference type="SMART" id="SM00220">
    <property type="entry name" value="S_TKc"/>
    <property type="match status" value="1"/>
</dbReference>
<dbReference type="SUPFAM" id="SSF56112">
    <property type="entry name" value="Protein kinase-like (PK-like)"/>
    <property type="match status" value="1"/>
</dbReference>
<dbReference type="PROSITE" id="PS00107">
    <property type="entry name" value="PROTEIN_KINASE_ATP"/>
    <property type="match status" value="1"/>
</dbReference>
<dbReference type="PROSITE" id="PS50011">
    <property type="entry name" value="PROTEIN_KINASE_DOM"/>
    <property type="match status" value="1"/>
</dbReference>
<dbReference type="PROSITE" id="PS50951">
    <property type="entry name" value="SARAH"/>
    <property type="match status" value="1"/>
</dbReference>
<organism>
    <name type="scientific">Caenorhabditis elegans</name>
    <dbReference type="NCBI Taxonomy" id="6239"/>
    <lineage>
        <taxon>Eukaryota</taxon>
        <taxon>Metazoa</taxon>
        <taxon>Ecdysozoa</taxon>
        <taxon>Nematoda</taxon>
        <taxon>Chromadorea</taxon>
        <taxon>Rhabditida</taxon>
        <taxon>Rhabditina</taxon>
        <taxon>Rhabditomorpha</taxon>
        <taxon>Rhabditoidea</taxon>
        <taxon>Rhabditidae</taxon>
        <taxon>Peloderinae</taxon>
        <taxon>Caenorhabditis</taxon>
    </lineage>
</organism>
<comment type="function">
    <text evidence="7">Serine/threonine-protein kinase which extends lifespan and delays tissue aging, probably by activating daf-16.</text>
</comment>
<comment type="catalytic activity">
    <reaction>
        <text>L-seryl-[protein] + ATP = O-phospho-L-seryl-[protein] + ADP + H(+)</text>
        <dbReference type="Rhea" id="RHEA:17989"/>
        <dbReference type="Rhea" id="RHEA-COMP:9863"/>
        <dbReference type="Rhea" id="RHEA-COMP:11604"/>
        <dbReference type="ChEBI" id="CHEBI:15378"/>
        <dbReference type="ChEBI" id="CHEBI:29999"/>
        <dbReference type="ChEBI" id="CHEBI:30616"/>
        <dbReference type="ChEBI" id="CHEBI:83421"/>
        <dbReference type="ChEBI" id="CHEBI:456216"/>
        <dbReference type="EC" id="2.7.11.1"/>
    </reaction>
</comment>
<comment type="catalytic activity">
    <reaction>
        <text>L-threonyl-[protein] + ATP = O-phospho-L-threonyl-[protein] + ADP + H(+)</text>
        <dbReference type="Rhea" id="RHEA:46608"/>
        <dbReference type="Rhea" id="RHEA-COMP:11060"/>
        <dbReference type="Rhea" id="RHEA-COMP:11605"/>
        <dbReference type="ChEBI" id="CHEBI:15378"/>
        <dbReference type="ChEBI" id="CHEBI:30013"/>
        <dbReference type="ChEBI" id="CHEBI:30616"/>
        <dbReference type="ChEBI" id="CHEBI:61977"/>
        <dbReference type="ChEBI" id="CHEBI:456216"/>
        <dbReference type="EC" id="2.7.11.1"/>
    </reaction>
</comment>
<comment type="cofactor">
    <cofactor evidence="1">
        <name>Mg(2+)</name>
        <dbReference type="ChEBI" id="CHEBI:18420"/>
    </cofactor>
</comment>
<comment type="subunit">
    <text evidence="8">Interacts with rsf-1 (via SARAH domain); the interaction is required for the phosphorylation of cst-1.</text>
</comment>
<comment type="alternative products">
    <event type="alternative splicing"/>
    <isoform>
        <id>Q9NB31-1</id>
        <name evidence="11">b</name>
        <sequence type="displayed"/>
    </isoform>
    <isoform>
        <id>Q9NB31-2</id>
        <name evidence="10">a</name>
        <sequence type="described" ref="VSP_020043"/>
    </isoform>
</comment>
<comment type="tissue specificity">
    <text evidence="7">Widely expressed in epidermal cells.</text>
</comment>
<comment type="PTM">
    <text evidence="6">Proteolytically cleaved by caspase-3 during apoptosis which results in kinase activation.</text>
</comment>
<comment type="PTM">
    <text evidence="8">Phosphorylated.</text>
</comment>
<comment type="similarity">
    <text evidence="9">Belongs to the protein kinase superfamily. STE Ser/Thr protein kinase family. STE20 subfamily.</text>
</comment>
<accession>Q9NB31</accession>
<accession>Q2AAC7</accession>
<proteinExistence type="evidence at protein level"/>
<name>CST1_CAEEL</name>
<gene>
    <name evidence="11" type="primary">cst-1</name>
    <name evidence="11" type="ORF">F14H12.4</name>
</gene>
<keyword id="KW-0025">Alternative splicing</keyword>
<keyword id="KW-0067">ATP-binding</keyword>
<keyword id="KW-0175">Coiled coil</keyword>
<keyword id="KW-0418">Kinase</keyword>
<keyword id="KW-0547">Nucleotide-binding</keyword>
<keyword id="KW-0597">Phosphoprotein</keyword>
<keyword id="KW-1185">Reference proteome</keyword>
<keyword id="KW-0723">Serine/threonine-protein kinase</keyword>
<keyword id="KW-0808">Transferase</keyword>
<protein>
    <recommendedName>
        <fullName>Serine/threonine-protein kinase cst-1</fullName>
        <ecNumber>2.7.11.1</ecNumber>
    </recommendedName>
    <alternativeName>
        <fullName>STE20-like kinase 1</fullName>
    </alternativeName>
    <alternativeName>
        <fullName>STE20-like kinase MST</fullName>
    </alternativeName>
    <alternativeName>
        <fullName>cMST</fullName>
    </alternativeName>
    <component>
        <recommendedName>
            <fullName>Serine/threonine-protein kinase cst-1 37kDa subunit</fullName>
        </recommendedName>
    </component>
    <component>
        <recommendedName>
            <fullName>Serine/threonine-protein kinase cst-1 18kDa subunit</fullName>
        </recommendedName>
    </component>
</protein>
<evidence type="ECO:0000250" key="1"/>
<evidence type="ECO:0000255" key="2"/>
<evidence type="ECO:0000255" key="3">
    <source>
        <dbReference type="PROSITE-ProRule" id="PRU00159"/>
    </source>
</evidence>
<evidence type="ECO:0000255" key="4">
    <source>
        <dbReference type="PROSITE-ProRule" id="PRU00310"/>
    </source>
</evidence>
<evidence type="ECO:0000256" key="5">
    <source>
        <dbReference type="SAM" id="MobiDB-lite"/>
    </source>
</evidence>
<evidence type="ECO:0000269" key="6">
    <source>
    </source>
</evidence>
<evidence type="ECO:0000269" key="7">
    <source>
    </source>
</evidence>
<evidence type="ECO:0000269" key="8">
    <source>
    </source>
</evidence>
<evidence type="ECO:0000305" key="9"/>
<evidence type="ECO:0000312" key="10">
    <source>
        <dbReference type="WormBase" id="F14H12.4a"/>
    </source>
</evidence>
<evidence type="ECO:0000312" key="11">
    <source>
        <dbReference type="WormBase" id="F14H12.4b"/>
    </source>
</evidence>
<reference key="1">
    <citation type="journal article" date="2001" name="J. Biol. Chem.">
        <title>MST, a physiological caspase substrate, highly sensitizes apoptosis both upstream and downstream of caspase activation.</title>
        <authorList>
            <person name="Lee K.-K."/>
            <person name="Ohyama T."/>
            <person name="Yajima N."/>
            <person name="Tsubuki S."/>
            <person name="Yonehara S."/>
        </authorList>
    </citation>
    <scope>NUCLEOTIDE SEQUENCE [MRNA] (ISOFORM B)</scope>
    <scope>PROTEOLYTIC PROCESSING</scope>
    <source>
        <strain>Bristol N2</strain>
    </source>
</reference>
<reference key="2">
    <citation type="journal article" date="1998" name="Science">
        <title>Genome sequence of the nematode C. elegans: a platform for investigating biology.</title>
        <authorList>
            <consortium name="The C. elegans sequencing consortium"/>
        </authorList>
    </citation>
    <scope>NUCLEOTIDE SEQUENCE [LARGE SCALE GENOMIC DNA]</scope>
    <source>
        <strain>Bristol N2</strain>
    </source>
</reference>
<reference key="3">
    <citation type="journal article" date="2006" name="Cell">
        <title>A conserved MST-FOXO signaling pathway mediates oxidative-stress responses and extends life span.</title>
        <authorList>
            <person name="Lehtinen M.K."/>
            <person name="Yuan Z."/>
            <person name="Boag P.R."/>
            <person name="Yang Y."/>
            <person name="Villen J."/>
            <person name="Becker E.B.E."/>
            <person name="DiBacco S."/>
            <person name="de la Iglesia N."/>
            <person name="Gygi S.P."/>
            <person name="Blackwell T.K."/>
            <person name="Bonni A."/>
        </authorList>
    </citation>
    <scope>FUNCTION</scope>
    <scope>TISSUE SPECIFICITY</scope>
</reference>
<reference key="4">
    <citation type="journal article" date="2013" name="Exp. Cell Res.">
        <title>Characterization of RSF-1, the Caenorhabditis elegans homolog of the Ras-association domain family protein 1.</title>
        <authorList>
            <person name="Iwasa H."/>
            <person name="Kuroyanagi H."/>
            <person name="Maimaiti S."/>
            <person name="Ikeda M."/>
            <person name="Nakagawa K."/>
            <person name="Hata Y."/>
        </authorList>
    </citation>
    <scope>INTERACTION WITH RSF-1</scope>
    <scope>PHOSPHORYLATION</scope>
</reference>
<feature type="chain" id="PRO_0000247763" description="Serine/threonine-protein kinase cst-1">
    <location>
        <begin position="1"/>
        <end position="497"/>
    </location>
</feature>
<feature type="chain" id="PRO_0000413725" description="Serine/threonine-protein kinase cst-1 37kDa subunit">
    <location>
        <begin position="1"/>
        <end position="333"/>
    </location>
</feature>
<feature type="chain" id="PRO_0000413726" description="Serine/threonine-protein kinase cst-1 18kDa subunit">
    <location>
        <begin position="334"/>
        <end position="494"/>
    </location>
</feature>
<feature type="domain" description="Protein kinase" evidence="3">
    <location>
        <begin position="35"/>
        <end position="286"/>
    </location>
</feature>
<feature type="domain" description="SARAH" evidence="4">
    <location>
        <begin position="446"/>
        <end position="493"/>
    </location>
</feature>
<feature type="region of interest" description="Disordered" evidence="5">
    <location>
        <begin position="1"/>
        <end position="27"/>
    </location>
</feature>
<feature type="region of interest" description="Disordered" evidence="5">
    <location>
        <begin position="367"/>
        <end position="416"/>
    </location>
</feature>
<feature type="coiled-coil region" evidence="2">
    <location>
        <begin position="450"/>
        <end position="486"/>
    </location>
</feature>
<feature type="compositionally biased region" description="Polar residues" evidence="5">
    <location>
        <begin position="390"/>
        <end position="416"/>
    </location>
</feature>
<feature type="active site" description="Proton acceptor" evidence="3">
    <location>
        <position position="154"/>
    </location>
</feature>
<feature type="binding site" evidence="3">
    <location>
        <begin position="41"/>
        <end position="49"/>
    </location>
    <ligand>
        <name>ATP</name>
        <dbReference type="ChEBI" id="CHEBI:30616"/>
    </ligand>
</feature>
<feature type="binding site" evidence="3">
    <location>
        <position position="64"/>
    </location>
    <ligand>
        <name>ATP</name>
        <dbReference type="ChEBI" id="CHEBI:30616"/>
    </ligand>
</feature>
<feature type="site" description="Cleavage; by caspase-3">
    <location>
        <begin position="333"/>
        <end position="334"/>
    </location>
</feature>
<feature type="splice variant" id="VSP_020043" description="In isoform a." evidence="9">
    <original>IPG</original>
    <variation>S</variation>
    <location>
        <begin position="371"/>
        <end position="373"/>
    </location>
</feature>